<feature type="chain" id="PRO_0000118604" description="NAD(P)H-quinone oxidoreductase subunit H, chloroplastic">
    <location>
        <begin position="1"/>
        <end position="391"/>
    </location>
</feature>
<name>NDHH_MESVI</name>
<comment type="function">
    <text evidence="1">NDH shuttles electrons from NAD(P)H:plastoquinone, via FMN and iron-sulfur (Fe-S) centers, to quinones in the photosynthetic chain and possibly in a chloroplast respiratory chain. The immediate electron acceptor for the enzyme in this species is believed to be plastoquinone. Couples the redox reaction to proton translocation, and thus conserves the redox energy in a proton gradient.</text>
</comment>
<comment type="catalytic activity">
    <reaction evidence="1">
        <text>a plastoquinone + NADH + (n+1) H(+)(in) = a plastoquinol + NAD(+) + n H(+)(out)</text>
        <dbReference type="Rhea" id="RHEA:42608"/>
        <dbReference type="Rhea" id="RHEA-COMP:9561"/>
        <dbReference type="Rhea" id="RHEA-COMP:9562"/>
        <dbReference type="ChEBI" id="CHEBI:15378"/>
        <dbReference type="ChEBI" id="CHEBI:17757"/>
        <dbReference type="ChEBI" id="CHEBI:57540"/>
        <dbReference type="ChEBI" id="CHEBI:57945"/>
        <dbReference type="ChEBI" id="CHEBI:62192"/>
    </reaction>
</comment>
<comment type="catalytic activity">
    <reaction evidence="1">
        <text>a plastoquinone + NADPH + (n+1) H(+)(in) = a plastoquinol + NADP(+) + n H(+)(out)</text>
        <dbReference type="Rhea" id="RHEA:42612"/>
        <dbReference type="Rhea" id="RHEA-COMP:9561"/>
        <dbReference type="Rhea" id="RHEA-COMP:9562"/>
        <dbReference type="ChEBI" id="CHEBI:15378"/>
        <dbReference type="ChEBI" id="CHEBI:17757"/>
        <dbReference type="ChEBI" id="CHEBI:57783"/>
        <dbReference type="ChEBI" id="CHEBI:58349"/>
        <dbReference type="ChEBI" id="CHEBI:62192"/>
    </reaction>
</comment>
<comment type="subunit">
    <text evidence="1">NDH is composed of at least 16 different subunits, 5 of which are encoded in the nucleus.</text>
</comment>
<comment type="subcellular location">
    <subcellularLocation>
        <location evidence="1">Plastid</location>
        <location evidence="1">Chloroplast thylakoid membrane</location>
        <topology evidence="1">Peripheral membrane protein</topology>
        <orientation evidence="1">Stromal side</orientation>
    </subcellularLocation>
</comment>
<comment type="similarity">
    <text evidence="1">Belongs to the complex I 49 kDa subunit family.</text>
</comment>
<evidence type="ECO:0000255" key="1">
    <source>
        <dbReference type="HAMAP-Rule" id="MF_01358"/>
    </source>
</evidence>
<keyword id="KW-0150">Chloroplast</keyword>
<keyword id="KW-0472">Membrane</keyword>
<keyword id="KW-0520">NAD</keyword>
<keyword id="KW-0521">NADP</keyword>
<keyword id="KW-0934">Plastid</keyword>
<keyword id="KW-0618">Plastoquinone</keyword>
<keyword id="KW-0874">Quinone</keyword>
<keyword id="KW-0793">Thylakoid</keyword>
<keyword id="KW-1278">Translocase</keyword>
<keyword id="KW-0813">Transport</keyword>
<accession>Q9MUL0</accession>
<reference key="1">
    <citation type="journal article" date="2000" name="Nature">
        <title>Ancestral chloroplast genome in Mesostigma viride reveals an early branch of green plant evolution.</title>
        <authorList>
            <person name="Lemieux C."/>
            <person name="Otis C."/>
            <person name="Turmel M."/>
        </authorList>
    </citation>
    <scope>NUCLEOTIDE SEQUENCE [LARGE SCALE GENOMIC DNA]</scope>
    <source>
        <strain>NIES-296 / KY-14 / CCMP 2046</strain>
    </source>
</reference>
<sequence length="391" mass="45200">MLQTKTDPMVISMGPHHPSMHGVLRLIVTLDGENVIDCEPVLGYLHRAMEKIAENRTIVQYLPYVTRWDYLATMFTEAITVNAPEKLANIEVPKRASYIRVIMLELSRIASHLLWLGPFMADIGAQTPFFYILREREMIYDLFEAATGMRMMHNYFRIGGVASDLPYGWVDKCLDFSDYFLPKVDEYERLITNNPIFLKRVRDVGFISREEAINWGLSGPMLRASGVQWDLRKVDNYECYGELDWNVQWQSDGDCLARYLVRLGEMRESTKIIQQALKAIPGGPYENLEARRLSKGRKSEWNNFEYQFVGKKPSPTFKIPKQEHYVRVEAPKGELGVFLMGDDNVFPWRWKIRSPGFINVQILPELVRGMKLADIMTILGSIDIIMGEVDR</sequence>
<dbReference type="EC" id="7.1.1.-" evidence="1"/>
<dbReference type="EMBL" id="AF166114">
    <property type="protein sequence ID" value="AAF43888.1"/>
    <property type="molecule type" value="Genomic_DNA"/>
</dbReference>
<dbReference type="RefSeq" id="NP_038450.2">
    <property type="nucleotide sequence ID" value="NC_002186.1"/>
</dbReference>
<dbReference type="SMR" id="Q9MUL0"/>
<dbReference type="GeneID" id="800880"/>
<dbReference type="GO" id="GO:0009535">
    <property type="term" value="C:chloroplast thylakoid membrane"/>
    <property type="evidence" value="ECO:0007669"/>
    <property type="project" value="UniProtKB-SubCell"/>
</dbReference>
<dbReference type="GO" id="GO:0051287">
    <property type="term" value="F:NAD binding"/>
    <property type="evidence" value="ECO:0007669"/>
    <property type="project" value="InterPro"/>
</dbReference>
<dbReference type="GO" id="GO:0016655">
    <property type="term" value="F:oxidoreductase activity, acting on NAD(P)H, quinone or similar compound as acceptor"/>
    <property type="evidence" value="ECO:0007669"/>
    <property type="project" value="UniProtKB-UniRule"/>
</dbReference>
<dbReference type="GO" id="GO:0048038">
    <property type="term" value="F:quinone binding"/>
    <property type="evidence" value="ECO:0007669"/>
    <property type="project" value="UniProtKB-KW"/>
</dbReference>
<dbReference type="GO" id="GO:0019684">
    <property type="term" value="P:photosynthesis, light reaction"/>
    <property type="evidence" value="ECO:0007669"/>
    <property type="project" value="UniProtKB-UniRule"/>
</dbReference>
<dbReference type="Gene3D" id="1.10.645.10">
    <property type="entry name" value="Cytochrome-c3 Hydrogenase, chain B"/>
    <property type="match status" value="1"/>
</dbReference>
<dbReference type="HAMAP" id="MF_01358">
    <property type="entry name" value="NDH1_NuoD"/>
    <property type="match status" value="1"/>
</dbReference>
<dbReference type="InterPro" id="IPR001135">
    <property type="entry name" value="NADH_Q_OxRdtase_suD"/>
</dbReference>
<dbReference type="InterPro" id="IPR014029">
    <property type="entry name" value="NADH_UbQ_OxRdtase_49kDa_CS"/>
</dbReference>
<dbReference type="InterPro" id="IPR022885">
    <property type="entry name" value="NDH1_su_D/H"/>
</dbReference>
<dbReference type="InterPro" id="IPR029014">
    <property type="entry name" value="NiFe-Hase_large"/>
</dbReference>
<dbReference type="NCBIfam" id="NF004739">
    <property type="entry name" value="PRK06075.1"/>
    <property type="match status" value="1"/>
</dbReference>
<dbReference type="NCBIfam" id="NF005649">
    <property type="entry name" value="PRK07415.1"/>
    <property type="match status" value="1"/>
</dbReference>
<dbReference type="PANTHER" id="PTHR11993:SF10">
    <property type="entry name" value="NADH DEHYDROGENASE [UBIQUINONE] IRON-SULFUR PROTEIN 2, MITOCHONDRIAL"/>
    <property type="match status" value="1"/>
</dbReference>
<dbReference type="PANTHER" id="PTHR11993">
    <property type="entry name" value="NADH-UBIQUINONE OXIDOREDUCTASE 49 KDA SUBUNIT"/>
    <property type="match status" value="1"/>
</dbReference>
<dbReference type="Pfam" id="PF00346">
    <property type="entry name" value="Complex1_49kDa"/>
    <property type="match status" value="1"/>
</dbReference>
<dbReference type="SUPFAM" id="SSF56762">
    <property type="entry name" value="HydB/Nqo4-like"/>
    <property type="match status" value="1"/>
</dbReference>
<dbReference type="PROSITE" id="PS00535">
    <property type="entry name" value="COMPLEX1_49K"/>
    <property type="match status" value="1"/>
</dbReference>
<protein>
    <recommendedName>
        <fullName evidence="1">NAD(P)H-quinone oxidoreductase subunit H, chloroplastic</fullName>
        <ecNumber evidence="1">7.1.1.-</ecNumber>
    </recommendedName>
    <alternativeName>
        <fullName>NAD(P)H dehydrogenase subunit H</fullName>
    </alternativeName>
    <alternativeName>
        <fullName evidence="1">NADH-plastoquinone oxidoreductase 49 kDa subunit</fullName>
    </alternativeName>
    <alternativeName>
        <fullName evidence="1">NADH-plastoquinone oxidoreductase subunit H</fullName>
    </alternativeName>
</protein>
<proteinExistence type="inferred from homology"/>
<gene>
    <name evidence="1" type="primary">ndhH</name>
</gene>
<geneLocation type="chloroplast"/>
<organism>
    <name type="scientific">Mesostigma viride</name>
    <name type="common">Green alga</name>
    <dbReference type="NCBI Taxonomy" id="41882"/>
    <lineage>
        <taxon>Eukaryota</taxon>
        <taxon>Viridiplantae</taxon>
        <taxon>Streptophyta</taxon>
        <taxon>Mesostigmatophyceae</taxon>
        <taxon>Mesostigmatales</taxon>
        <taxon>Mesostigmataceae</taxon>
        <taxon>Mesostigma</taxon>
    </lineage>
</organism>